<protein>
    <recommendedName>
        <fullName evidence="1">RNA-binding protein Hfq</fullName>
    </recommendedName>
</protein>
<sequence>MAKGQSLQDPFLNALRRERVPVSIYLVNGIKLQGQVESFDQFVILLKNTVSQMVYKHAISTVVPARPFNVAGHQNAQGGYGAQDDMPSGE</sequence>
<reference key="1">
    <citation type="submission" date="2006-08" db="EMBL/GenBank/DDBJ databases">
        <title>Complete sequence of Shewanella sp. MR-4.</title>
        <authorList>
            <consortium name="US DOE Joint Genome Institute"/>
            <person name="Copeland A."/>
            <person name="Lucas S."/>
            <person name="Lapidus A."/>
            <person name="Barry K."/>
            <person name="Detter J.C."/>
            <person name="Glavina del Rio T."/>
            <person name="Hammon N."/>
            <person name="Israni S."/>
            <person name="Dalin E."/>
            <person name="Tice H."/>
            <person name="Pitluck S."/>
            <person name="Kiss H."/>
            <person name="Brettin T."/>
            <person name="Bruce D."/>
            <person name="Han C."/>
            <person name="Tapia R."/>
            <person name="Gilna P."/>
            <person name="Schmutz J."/>
            <person name="Larimer F."/>
            <person name="Land M."/>
            <person name="Hauser L."/>
            <person name="Kyrpides N."/>
            <person name="Mikhailova N."/>
            <person name="Nealson K."/>
            <person name="Konstantinidis K."/>
            <person name="Klappenbach J."/>
            <person name="Tiedje J."/>
            <person name="Richardson P."/>
        </authorList>
    </citation>
    <scope>NUCLEOTIDE SEQUENCE [LARGE SCALE GENOMIC DNA]</scope>
    <source>
        <strain>MR-4</strain>
    </source>
</reference>
<evidence type="ECO:0000255" key="1">
    <source>
        <dbReference type="HAMAP-Rule" id="MF_00436"/>
    </source>
</evidence>
<evidence type="ECO:0000255" key="2">
    <source>
        <dbReference type="PROSITE-ProRule" id="PRU01346"/>
    </source>
</evidence>
<keyword id="KW-0694">RNA-binding</keyword>
<keyword id="KW-0346">Stress response</keyword>
<name>HFQ_SHESM</name>
<organism>
    <name type="scientific">Shewanella sp. (strain MR-4)</name>
    <dbReference type="NCBI Taxonomy" id="60480"/>
    <lineage>
        <taxon>Bacteria</taxon>
        <taxon>Pseudomonadati</taxon>
        <taxon>Pseudomonadota</taxon>
        <taxon>Gammaproteobacteria</taxon>
        <taxon>Alteromonadales</taxon>
        <taxon>Shewanellaceae</taxon>
        <taxon>Shewanella</taxon>
    </lineage>
</organism>
<proteinExistence type="inferred from homology"/>
<comment type="function">
    <text evidence="1">RNA chaperone that binds small regulatory RNA (sRNAs) and mRNAs to facilitate mRNA translational regulation in response to envelope stress, environmental stress and changes in metabolite concentrations. Also binds with high specificity to tRNAs.</text>
</comment>
<comment type="subunit">
    <text evidence="1">Homohexamer.</text>
</comment>
<comment type="similarity">
    <text evidence="1">Belongs to the Hfq family.</text>
</comment>
<dbReference type="EMBL" id="CP000446">
    <property type="protein sequence ID" value="ABI37678.1"/>
    <property type="molecule type" value="Genomic_DNA"/>
</dbReference>
<dbReference type="RefSeq" id="WP_011070934.1">
    <property type="nucleotide sequence ID" value="NC_008321.1"/>
</dbReference>
<dbReference type="SMR" id="Q0HMN9"/>
<dbReference type="GeneID" id="94726586"/>
<dbReference type="KEGG" id="she:Shewmr4_0598"/>
<dbReference type="HOGENOM" id="CLU_113688_2_2_6"/>
<dbReference type="GO" id="GO:0005829">
    <property type="term" value="C:cytosol"/>
    <property type="evidence" value="ECO:0007669"/>
    <property type="project" value="TreeGrafter"/>
</dbReference>
<dbReference type="GO" id="GO:0003723">
    <property type="term" value="F:RNA binding"/>
    <property type="evidence" value="ECO:0007669"/>
    <property type="project" value="UniProtKB-UniRule"/>
</dbReference>
<dbReference type="GO" id="GO:0006355">
    <property type="term" value="P:regulation of DNA-templated transcription"/>
    <property type="evidence" value="ECO:0007669"/>
    <property type="project" value="InterPro"/>
</dbReference>
<dbReference type="GO" id="GO:0043487">
    <property type="term" value="P:regulation of RNA stability"/>
    <property type="evidence" value="ECO:0007669"/>
    <property type="project" value="TreeGrafter"/>
</dbReference>
<dbReference type="GO" id="GO:0045974">
    <property type="term" value="P:regulation of translation, ncRNA-mediated"/>
    <property type="evidence" value="ECO:0007669"/>
    <property type="project" value="TreeGrafter"/>
</dbReference>
<dbReference type="CDD" id="cd01716">
    <property type="entry name" value="Hfq"/>
    <property type="match status" value="1"/>
</dbReference>
<dbReference type="FunFam" id="2.30.30.100:FF:000001">
    <property type="entry name" value="RNA-binding protein Hfq"/>
    <property type="match status" value="1"/>
</dbReference>
<dbReference type="Gene3D" id="2.30.30.100">
    <property type="match status" value="1"/>
</dbReference>
<dbReference type="HAMAP" id="MF_00436">
    <property type="entry name" value="Hfq"/>
    <property type="match status" value="1"/>
</dbReference>
<dbReference type="InterPro" id="IPR005001">
    <property type="entry name" value="Hfq"/>
</dbReference>
<dbReference type="InterPro" id="IPR010920">
    <property type="entry name" value="LSM_dom_sf"/>
</dbReference>
<dbReference type="InterPro" id="IPR047575">
    <property type="entry name" value="Sm"/>
</dbReference>
<dbReference type="NCBIfam" id="TIGR02383">
    <property type="entry name" value="Hfq"/>
    <property type="match status" value="1"/>
</dbReference>
<dbReference type="NCBIfam" id="NF001602">
    <property type="entry name" value="PRK00395.1"/>
    <property type="match status" value="1"/>
</dbReference>
<dbReference type="PANTHER" id="PTHR34772">
    <property type="entry name" value="RNA-BINDING PROTEIN HFQ"/>
    <property type="match status" value="1"/>
</dbReference>
<dbReference type="PANTHER" id="PTHR34772:SF1">
    <property type="entry name" value="RNA-BINDING PROTEIN HFQ"/>
    <property type="match status" value="1"/>
</dbReference>
<dbReference type="Pfam" id="PF17209">
    <property type="entry name" value="Hfq"/>
    <property type="match status" value="1"/>
</dbReference>
<dbReference type="SUPFAM" id="SSF50182">
    <property type="entry name" value="Sm-like ribonucleoproteins"/>
    <property type="match status" value="1"/>
</dbReference>
<dbReference type="PROSITE" id="PS52002">
    <property type="entry name" value="SM"/>
    <property type="match status" value="1"/>
</dbReference>
<accession>Q0HMN9</accession>
<gene>
    <name evidence="1" type="primary">hfq</name>
    <name type="ordered locus">Shewmr4_0598</name>
</gene>
<feature type="chain" id="PRO_0000265189" description="RNA-binding protein Hfq">
    <location>
        <begin position="1"/>
        <end position="90"/>
    </location>
</feature>
<feature type="domain" description="Sm" evidence="2">
    <location>
        <begin position="9"/>
        <end position="68"/>
    </location>
</feature>